<reference key="1">
    <citation type="journal article" date="2005" name="Proc. Natl. Acad. Sci. U.S.A.">
        <title>Comparison of the complete genome sequences of Pseudomonas syringae pv. syringae B728a and pv. tomato DC3000.</title>
        <authorList>
            <person name="Feil H."/>
            <person name="Feil W.S."/>
            <person name="Chain P."/>
            <person name="Larimer F."/>
            <person name="Dibartolo G."/>
            <person name="Copeland A."/>
            <person name="Lykidis A."/>
            <person name="Trong S."/>
            <person name="Nolan M."/>
            <person name="Goltsman E."/>
            <person name="Thiel J."/>
            <person name="Malfatti S."/>
            <person name="Loper J.E."/>
            <person name="Lapidus A."/>
            <person name="Detter J.C."/>
            <person name="Land M."/>
            <person name="Richardson P.M."/>
            <person name="Kyrpides N.C."/>
            <person name="Ivanova N."/>
            <person name="Lindow S.E."/>
        </authorList>
    </citation>
    <scope>NUCLEOTIDE SEQUENCE [LARGE SCALE GENOMIC DNA]</scope>
    <source>
        <strain>B728a</strain>
    </source>
</reference>
<feature type="chain" id="PRO_0000255347" description="Glycerol-3-phosphate dehydrogenase [NAD(P)+]">
    <location>
        <begin position="1"/>
        <end position="341"/>
    </location>
</feature>
<feature type="active site" description="Proton acceptor" evidence="1">
    <location>
        <position position="191"/>
    </location>
</feature>
<feature type="binding site" evidence="1">
    <location>
        <position position="14"/>
    </location>
    <ligand>
        <name>NADPH</name>
        <dbReference type="ChEBI" id="CHEBI:57783"/>
    </ligand>
</feature>
<feature type="binding site" evidence="1">
    <location>
        <position position="15"/>
    </location>
    <ligand>
        <name>NADPH</name>
        <dbReference type="ChEBI" id="CHEBI:57783"/>
    </ligand>
</feature>
<feature type="binding site" evidence="1">
    <location>
        <position position="35"/>
    </location>
    <ligand>
        <name>NADPH</name>
        <dbReference type="ChEBI" id="CHEBI:57783"/>
    </ligand>
</feature>
<feature type="binding site" evidence="1">
    <location>
        <position position="108"/>
    </location>
    <ligand>
        <name>NADPH</name>
        <dbReference type="ChEBI" id="CHEBI:57783"/>
    </ligand>
</feature>
<feature type="binding site" evidence="1">
    <location>
        <position position="108"/>
    </location>
    <ligand>
        <name>sn-glycerol 3-phosphate</name>
        <dbReference type="ChEBI" id="CHEBI:57597"/>
    </ligand>
</feature>
<feature type="binding site" evidence="1">
    <location>
        <position position="136"/>
    </location>
    <ligand>
        <name>sn-glycerol 3-phosphate</name>
        <dbReference type="ChEBI" id="CHEBI:57597"/>
    </ligand>
</feature>
<feature type="binding site" evidence="1">
    <location>
        <position position="140"/>
    </location>
    <ligand>
        <name>NADPH</name>
        <dbReference type="ChEBI" id="CHEBI:57783"/>
    </ligand>
</feature>
<feature type="binding site" evidence="1">
    <location>
        <position position="191"/>
    </location>
    <ligand>
        <name>sn-glycerol 3-phosphate</name>
        <dbReference type="ChEBI" id="CHEBI:57597"/>
    </ligand>
</feature>
<feature type="binding site" evidence="1">
    <location>
        <position position="244"/>
    </location>
    <ligand>
        <name>sn-glycerol 3-phosphate</name>
        <dbReference type="ChEBI" id="CHEBI:57597"/>
    </ligand>
</feature>
<feature type="binding site" evidence="1">
    <location>
        <position position="254"/>
    </location>
    <ligand>
        <name>sn-glycerol 3-phosphate</name>
        <dbReference type="ChEBI" id="CHEBI:57597"/>
    </ligand>
</feature>
<feature type="binding site" evidence="1">
    <location>
        <position position="255"/>
    </location>
    <ligand>
        <name>NADPH</name>
        <dbReference type="ChEBI" id="CHEBI:57783"/>
    </ligand>
</feature>
<feature type="binding site" evidence="1">
    <location>
        <position position="255"/>
    </location>
    <ligand>
        <name>sn-glycerol 3-phosphate</name>
        <dbReference type="ChEBI" id="CHEBI:57597"/>
    </ligand>
</feature>
<feature type="binding site" evidence="1">
    <location>
        <position position="256"/>
    </location>
    <ligand>
        <name>sn-glycerol 3-phosphate</name>
        <dbReference type="ChEBI" id="CHEBI:57597"/>
    </ligand>
</feature>
<feature type="binding site" evidence="1">
    <location>
        <position position="279"/>
    </location>
    <ligand>
        <name>NADPH</name>
        <dbReference type="ChEBI" id="CHEBI:57783"/>
    </ligand>
</feature>
<feature type="binding site" evidence="1">
    <location>
        <position position="281"/>
    </location>
    <ligand>
        <name>NADPH</name>
        <dbReference type="ChEBI" id="CHEBI:57783"/>
    </ligand>
</feature>
<sequence>MTTQQPVAVLGGGSFGTAIANLLAENGHQVRQWMRDPEQAEAIRVNRENPRYLKGIRIRPEVEPVTDLTAVLDASELIFVALPSSALRSVLSPHVARLNGKMLVSLTKGIEAQSFKLMSQILEEIVPQARIGVLSGPNLAREIAEHALTATVVASEDEALCQEVQAALHGRTFRVYASNDRFGVELGGALKNVYAIIAGMAVALDMGENTKSMLITRALAEMTRFAVSQGANPMTFLGLAGVGDLIVTCSSPKSRNYQVGFALGQGLTLDEAVTRLGEVAEGVNTLKVLKVKAQEVQVYMPLVAGLHAILFEGRTLSQVIEALMRAEPKTDVDFISITGFN</sequence>
<organism>
    <name type="scientific">Pseudomonas syringae pv. syringae (strain B728a)</name>
    <dbReference type="NCBI Taxonomy" id="205918"/>
    <lineage>
        <taxon>Bacteria</taxon>
        <taxon>Pseudomonadati</taxon>
        <taxon>Pseudomonadota</taxon>
        <taxon>Gammaproteobacteria</taxon>
        <taxon>Pseudomonadales</taxon>
        <taxon>Pseudomonadaceae</taxon>
        <taxon>Pseudomonas</taxon>
        <taxon>Pseudomonas syringae</taxon>
    </lineage>
</organism>
<keyword id="KW-0963">Cytoplasm</keyword>
<keyword id="KW-0444">Lipid biosynthesis</keyword>
<keyword id="KW-0443">Lipid metabolism</keyword>
<keyword id="KW-0520">NAD</keyword>
<keyword id="KW-0521">NADP</keyword>
<keyword id="KW-0547">Nucleotide-binding</keyword>
<keyword id="KW-0560">Oxidoreductase</keyword>
<keyword id="KW-0594">Phospholipid biosynthesis</keyword>
<keyword id="KW-1208">Phospholipid metabolism</keyword>
<comment type="function">
    <text evidence="1">Catalyzes the reduction of the glycolytic intermediate dihydroxyacetone phosphate (DHAP) to sn-glycerol 3-phosphate (G3P), the key precursor for phospholipid synthesis.</text>
</comment>
<comment type="catalytic activity">
    <reaction evidence="1">
        <text>sn-glycerol 3-phosphate + NAD(+) = dihydroxyacetone phosphate + NADH + H(+)</text>
        <dbReference type="Rhea" id="RHEA:11092"/>
        <dbReference type="ChEBI" id="CHEBI:15378"/>
        <dbReference type="ChEBI" id="CHEBI:57540"/>
        <dbReference type="ChEBI" id="CHEBI:57597"/>
        <dbReference type="ChEBI" id="CHEBI:57642"/>
        <dbReference type="ChEBI" id="CHEBI:57945"/>
        <dbReference type="EC" id="1.1.1.94"/>
    </reaction>
    <physiologicalReaction direction="right-to-left" evidence="1">
        <dbReference type="Rhea" id="RHEA:11094"/>
    </physiologicalReaction>
</comment>
<comment type="catalytic activity">
    <reaction evidence="1">
        <text>sn-glycerol 3-phosphate + NADP(+) = dihydroxyacetone phosphate + NADPH + H(+)</text>
        <dbReference type="Rhea" id="RHEA:11096"/>
        <dbReference type="ChEBI" id="CHEBI:15378"/>
        <dbReference type="ChEBI" id="CHEBI:57597"/>
        <dbReference type="ChEBI" id="CHEBI:57642"/>
        <dbReference type="ChEBI" id="CHEBI:57783"/>
        <dbReference type="ChEBI" id="CHEBI:58349"/>
        <dbReference type="EC" id="1.1.1.94"/>
    </reaction>
    <physiologicalReaction direction="right-to-left" evidence="1">
        <dbReference type="Rhea" id="RHEA:11098"/>
    </physiologicalReaction>
</comment>
<comment type="pathway">
    <text evidence="1">Membrane lipid metabolism; glycerophospholipid metabolism.</text>
</comment>
<comment type="subcellular location">
    <subcellularLocation>
        <location evidence="1">Cytoplasm</location>
    </subcellularLocation>
</comment>
<comment type="similarity">
    <text evidence="1">Belongs to the NAD-dependent glycerol-3-phosphate dehydrogenase family.</text>
</comment>
<evidence type="ECO:0000255" key="1">
    <source>
        <dbReference type="HAMAP-Rule" id="MF_00394"/>
    </source>
</evidence>
<gene>
    <name evidence="1" type="primary">gpsA</name>
    <name type="ordered locus">Psyr_2022</name>
</gene>
<dbReference type="EC" id="1.1.1.94" evidence="1"/>
<dbReference type="EMBL" id="CP000075">
    <property type="protein sequence ID" value="AAY37065.1"/>
    <property type="molecule type" value="Genomic_DNA"/>
</dbReference>
<dbReference type="RefSeq" id="WP_011267382.1">
    <property type="nucleotide sequence ID" value="NC_007005.1"/>
</dbReference>
<dbReference type="RefSeq" id="YP_235103.1">
    <property type="nucleotide sequence ID" value="NC_007005.1"/>
</dbReference>
<dbReference type="SMR" id="Q4ZUV7"/>
<dbReference type="STRING" id="205918.Psyr_2022"/>
<dbReference type="KEGG" id="psb:Psyr_2022"/>
<dbReference type="PATRIC" id="fig|205918.7.peg.2065"/>
<dbReference type="eggNOG" id="COG0240">
    <property type="taxonomic scope" value="Bacteria"/>
</dbReference>
<dbReference type="HOGENOM" id="CLU_033449_0_2_6"/>
<dbReference type="OrthoDB" id="9812273at2"/>
<dbReference type="UniPathway" id="UPA00940"/>
<dbReference type="Proteomes" id="UP000000426">
    <property type="component" value="Chromosome"/>
</dbReference>
<dbReference type="GO" id="GO:0005829">
    <property type="term" value="C:cytosol"/>
    <property type="evidence" value="ECO:0007669"/>
    <property type="project" value="TreeGrafter"/>
</dbReference>
<dbReference type="GO" id="GO:0047952">
    <property type="term" value="F:glycerol-3-phosphate dehydrogenase [NAD(P)+] activity"/>
    <property type="evidence" value="ECO:0007669"/>
    <property type="project" value="UniProtKB-UniRule"/>
</dbReference>
<dbReference type="GO" id="GO:0051287">
    <property type="term" value="F:NAD binding"/>
    <property type="evidence" value="ECO:0007669"/>
    <property type="project" value="InterPro"/>
</dbReference>
<dbReference type="GO" id="GO:0005975">
    <property type="term" value="P:carbohydrate metabolic process"/>
    <property type="evidence" value="ECO:0007669"/>
    <property type="project" value="InterPro"/>
</dbReference>
<dbReference type="GO" id="GO:0046167">
    <property type="term" value="P:glycerol-3-phosphate biosynthetic process"/>
    <property type="evidence" value="ECO:0007669"/>
    <property type="project" value="UniProtKB-UniRule"/>
</dbReference>
<dbReference type="GO" id="GO:0046168">
    <property type="term" value="P:glycerol-3-phosphate catabolic process"/>
    <property type="evidence" value="ECO:0007669"/>
    <property type="project" value="InterPro"/>
</dbReference>
<dbReference type="GO" id="GO:0046474">
    <property type="term" value="P:glycerophospholipid biosynthetic process"/>
    <property type="evidence" value="ECO:0007669"/>
    <property type="project" value="TreeGrafter"/>
</dbReference>
<dbReference type="FunFam" id="1.10.1040.10:FF:000001">
    <property type="entry name" value="Glycerol-3-phosphate dehydrogenase [NAD(P)+]"/>
    <property type="match status" value="1"/>
</dbReference>
<dbReference type="FunFam" id="3.40.50.720:FF:000019">
    <property type="entry name" value="Glycerol-3-phosphate dehydrogenase [NAD(P)+]"/>
    <property type="match status" value="1"/>
</dbReference>
<dbReference type="Gene3D" id="1.10.1040.10">
    <property type="entry name" value="N-(1-d-carboxylethyl)-l-norvaline Dehydrogenase, domain 2"/>
    <property type="match status" value="1"/>
</dbReference>
<dbReference type="Gene3D" id="3.40.50.720">
    <property type="entry name" value="NAD(P)-binding Rossmann-like Domain"/>
    <property type="match status" value="1"/>
</dbReference>
<dbReference type="HAMAP" id="MF_00394">
    <property type="entry name" value="NAD_Glyc3P_dehydrog"/>
    <property type="match status" value="1"/>
</dbReference>
<dbReference type="InterPro" id="IPR008927">
    <property type="entry name" value="6-PGluconate_DH-like_C_sf"/>
</dbReference>
<dbReference type="InterPro" id="IPR013328">
    <property type="entry name" value="6PGD_dom2"/>
</dbReference>
<dbReference type="InterPro" id="IPR006168">
    <property type="entry name" value="G3P_DH_NAD-dep"/>
</dbReference>
<dbReference type="InterPro" id="IPR006109">
    <property type="entry name" value="G3P_DH_NAD-dep_C"/>
</dbReference>
<dbReference type="InterPro" id="IPR011128">
    <property type="entry name" value="G3P_DH_NAD-dep_N"/>
</dbReference>
<dbReference type="InterPro" id="IPR036291">
    <property type="entry name" value="NAD(P)-bd_dom_sf"/>
</dbReference>
<dbReference type="NCBIfam" id="NF000940">
    <property type="entry name" value="PRK00094.1-2"/>
    <property type="match status" value="1"/>
</dbReference>
<dbReference type="NCBIfam" id="NF000942">
    <property type="entry name" value="PRK00094.1-4"/>
    <property type="match status" value="1"/>
</dbReference>
<dbReference type="NCBIfam" id="NF000946">
    <property type="entry name" value="PRK00094.2-4"/>
    <property type="match status" value="1"/>
</dbReference>
<dbReference type="PANTHER" id="PTHR11728">
    <property type="entry name" value="GLYCEROL-3-PHOSPHATE DEHYDROGENASE"/>
    <property type="match status" value="1"/>
</dbReference>
<dbReference type="PANTHER" id="PTHR11728:SF1">
    <property type="entry name" value="GLYCEROL-3-PHOSPHATE DEHYDROGENASE [NAD(+)] 2, CHLOROPLASTIC"/>
    <property type="match status" value="1"/>
</dbReference>
<dbReference type="Pfam" id="PF07479">
    <property type="entry name" value="NAD_Gly3P_dh_C"/>
    <property type="match status" value="1"/>
</dbReference>
<dbReference type="Pfam" id="PF01210">
    <property type="entry name" value="NAD_Gly3P_dh_N"/>
    <property type="match status" value="1"/>
</dbReference>
<dbReference type="PIRSF" id="PIRSF000114">
    <property type="entry name" value="Glycerol-3-P_dh"/>
    <property type="match status" value="1"/>
</dbReference>
<dbReference type="PRINTS" id="PR00077">
    <property type="entry name" value="GPDHDRGNASE"/>
</dbReference>
<dbReference type="SUPFAM" id="SSF48179">
    <property type="entry name" value="6-phosphogluconate dehydrogenase C-terminal domain-like"/>
    <property type="match status" value="1"/>
</dbReference>
<dbReference type="SUPFAM" id="SSF51735">
    <property type="entry name" value="NAD(P)-binding Rossmann-fold domains"/>
    <property type="match status" value="1"/>
</dbReference>
<dbReference type="PROSITE" id="PS00957">
    <property type="entry name" value="NAD_G3PDH"/>
    <property type="match status" value="1"/>
</dbReference>
<protein>
    <recommendedName>
        <fullName evidence="1">Glycerol-3-phosphate dehydrogenase [NAD(P)+]</fullName>
        <ecNumber evidence="1">1.1.1.94</ecNumber>
    </recommendedName>
    <alternativeName>
        <fullName evidence="1">NAD(P)(+)-dependent glycerol-3-phosphate dehydrogenase</fullName>
    </alternativeName>
    <alternativeName>
        <fullName evidence="1">NAD(P)H-dependent dihydroxyacetone-phosphate reductase</fullName>
    </alternativeName>
</protein>
<accession>Q4ZUV7</accession>
<name>GPDA_PSEU2</name>
<proteinExistence type="inferred from homology"/>